<reference key="1">
    <citation type="journal article" date="1995" name="Bot. Acta">
        <title>Molecular phylogeny of the Papilionoideae (family Leguminosae): rbcL sequences versus chemical taxonomy.</title>
        <authorList>
            <person name="Kaess E."/>
            <person name="Wink M."/>
        </authorList>
    </citation>
    <scope>NUCLEOTIDE SEQUENCE [GENOMIC DNA]</scope>
    <source>
        <tissue>Leaf</tissue>
    </source>
</reference>
<organism>
    <name type="scientific">Lupinus pilosus</name>
    <name type="common">Mountain blue lupine</name>
    <name type="synonym">Lupinus hirsutus</name>
    <dbReference type="NCBI Taxonomy" id="53237"/>
    <lineage>
        <taxon>Eukaryota</taxon>
        <taxon>Viridiplantae</taxon>
        <taxon>Streptophyta</taxon>
        <taxon>Embryophyta</taxon>
        <taxon>Tracheophyta</taxon>
        <taxon>Spermatophyta</taxon>
        <taxon>Magnoliopsida</taxon>
        <taxon>eudicotyledons</taxon>
        <taxon>Gunneridae</taxon>
        <taxon>Pentapetalae</taxon>
        <taxon>rosids</taxon>
        <taxon>fabids</taxon>
        <taxon>Fabales</taxon>
        <taxon>Fabaceae</taxon>
        <taxon>Papilionoideae</taxon>
        <taxon>50 kb inversion clade</taxon>
        <taxon>genistoids sensu lato</taxon>
        <taxon>core genistoids</taxon>
        <taxon>Genisteae</taxon>
        <taxon>Lupinus</taxon>
    </lineage>
</organism>
<accession>P69589</accession>
<accession>P92398</accession>
<accession>P92402</accession>
<accession>P92409</accession>
<accession>P92410</accession>
<proteinExistence type="inferred from homology"/>
<dbReference type="EC" id="4.1.1.39" evidence="1"/>
<dbReference type="EMBL" id="Z70073">
    <property type="protein sequence ID" value="CAA93932.1"/>
    <property type="molecule type" value="Genomic_DNA"/>
</dbReference>
<dbReference type="SMR" id="P69589"/>
<dbReference type="GO" id="GO:0009507">
    <property type="term" value="C:chloroplast"/>
    <property type="evidence" value="ECO:0007669"/>
    <property type="project" value="UniProtKB-SubCell"/>
</dbReference>
<dbReference type="GO" id="GO:0000287">
    <property type="term" value="F:magnesium ion binding"/>
    <property type="evidence" value="ECO:0007669"/>
    <property type="project" value="InterPro"/>
</dbReference>
<dbReference type="GO" id="GO:0004497">
    <property type="term" value="F:monooxygenase activity"/>
    <property type="evidence" value="ECO:0007669"/>
    <property type="project" value="UniProtKB-KW"/>
</dbReference>
<dbReference type="GO" id="GO:0016984">
    <property type="term" value="F:ribulose-bisphosphate carboxylase activity"/>
    <property type="evidence" value="ECO:0007669"/>
    <property type="project" value="UniProtKB-EC"/>
</dbReference>
<dbReference type="GO" id="GO:0009853">
    <property type="term" value="P:photorespiration"/>
    <property type="evidence" value="ECO:0007669"/>
    <property type="project" value="UniProtKB-KW"/>
</dbReference>
<dbReference type="GO" id="GO:0019253">
    <property type="term" value="P:reductive pentose-phosphate cycle"/>
    <property type="evidence" value="ECO:0007669"/>
    <property type="project" value="UniProtKB-KW"/>
</dbReference>
<dbReference type="CDD" id="cd08212">
    <property type="entry name" value="RuBisCO_large_I"/>
    <property type="match status" value="1"/>
</dbReference>
<dbReference type="FunFam" id="3.20.20.110:FF:000001">
    <property type="entry name" value="Ribulose bisphosphate carboxylase large chain"/>
    <property type="match status" value="1"/>
</dbReference>
<dbReference type="FunFam" id="3.30.70.150:FF:000001">
    <property type="entry name" value="Ribulose bisphosphate carboxylase large chain"/>
    <property type="match status" value="1"/>
</dbReference>
<dbReference type="Gene3D" id="3.20.20.110">
    <property type="entry name" value="Ribulose bisphosphate carboxylase, large subunit, C-terminal domain"/>
    <property type="match status" value="1"/>
</dbReference>
<dbReference type="Gene3D" id="3.30.70.150">
    <property type="entry name" value="RuBisCO large subunit, N-terminal domain"/>
    <property type="match status" value="1"/>
</dbReference>
<dbReference type="HAMAP" id="MF_01338">
    <property type="entry name" value="RuBisCO_L_type1"/>
    <property type="match status" value="1"/>
</dbReference>
<dbReference type="InterPro" id="IPR033966">
    <property type="entry name" value="RuBisCO"/>
</dbReference>
<dbReference type="InterPro" id="IPR020878">
    <property type="entry name" value="RuBisCo_large_chain_AS"/>
</dbReference>
<dbReference type="InterPro" id="IPR000685">
    <property type="entry name" value="RuBisCO_lsu_C"/>
</dbReference>
<dbReference type="InterPro" id="IPR036376">
    <property type="entry name" value="RuBisCO_lsu_C_sf"/>
</dbReference>
<dbReference type="InterPro" id="IPR017443">
    <property type="entry name" value="RuBisCO_lsu_fd_N"/>
</dbReference>
<dbReference type="InterPro" id="IPR036422">
    <property type="entry name" value="RuBisCO_lsu_N_sf"/>
</dbReference>
<dbReference type="InterPro" id="IPR020888">
    <property type="entry name" value="RuBisCO_lsuI"/>
</dbReference>
<dbReference type="NCBIfam" id="NF003252">
    <property type="entry name" value="PRK04208.1"/>
    <property type="match status" value="1"/>
</dbReference>
<dbReference type="PANTHER" id="PTHR42704">
    <property type="entry name" value="RIBULOSE BISPHOSPHATE CARBOXYLASE"/>
    <property type="match status" value="1"/>
</dbReference>
<dbReference type="PANTHER" id="PTHR42704:SF16">
    <property type="entry name" value="RIBULOSE BISPHOSPHATE CARBOXYLASE LARGE CHAIN"/>
    <property type="match status" value="1"/>
</dbReference>
<dbReference type="Pfam" id="PF00016">
    <property type="entry name" value="RuBisCO_large"/>
    <property type="match status" value="1"/>
</dbReference>
<dbReference type="Pfam" id="PF02788">
    <property type="entry name" value="RuBisCO_large_N"/>
    <property type="match status" value="1"/>
</dbReference>
<dbReference type="SFLD" id="SFLDG01052">
    <property type="entry name" value="RuBisCO"/>
    <property type="match status" value="1"/>
</dbReference>
<dbReference type="SFLD" id="SFLDS00014">
    <property type="entry name" value="RuBisCO"/>
    <property type="match status" value="1"/>
</dbReference>
<dbReference type="SFLD" id="SFLDG00301">
    <property type="entry name" value="RuBisCO-like_proteins"/>
    <property type="match status" value="1"/>
</dbReference>
<dbReference type="SUPFAM" id="SSF51649">
    <property type="entry name" value="RuBisCo, C-terminal domain"/>
    <property type="match status" value="1"/>
</dbReference>
<dbReference type="SUPFAM" id="SSF54966">
    <property type="entry name" value="RuBisCO, large subunit, small (N-terminal) domain"/>
    <property type="match status" value="1"/>
</dbReference>
<dbReference type="PROSITE" id="PS00157">
    <property type="entry name" value="RUBISCO_LARGE"/>
    <property type="match status" value="1"/>
</dbReference>
<geneLocation type="chloroplast"/>
<protein>
    <recommendedName>
        <fullName evidence="1">Ribulose bisphosphate carboxylase large chain</fullName>
        <shortName evidence="1">RuBisCO large subunit</shortName>
        <ecNumber evidence="1">4.1.1.39</ecNumber>
    </recommendedName>
</protein>
<comment type="function">
    <text evidence="1">RuBisCO catalyzes two reactions: the carboxylation of D-ribulose 1,5-bisphosphate, the primary event in carbon dioxide fixation, as well as the oxidative fragmentation of the pentose substrate in the photorespiration process. Both reactions occur simultaneously and in competition at the same active site.</text>
</comment>
<comment type="catalytic activity">
    <reaction evidence="1">
        <text>2 (2R)-3-phosphoglycerate + 2 H(+) = D-ribulose 1,5-bisphosphate + CO2 + H2O</text>
        <dbReference type="Rhea" id="RHEA:23124"/>
        <dbReference type="ChEBI" id="CHEBI:15377"/>
        <dbReference type="ChEBI" id="CHEBI:15378"/>
        <dbReference type="ChEBI" id="CHEBI:16526"/>
        <dbReference type="ChEBI" id="CHEBI:57870"/>
        <dbReference type="ChEBI" id="CHEBI:58272"/>
        <dbReference type="EC" id="4.1.1.39"/>
    </reaction>
</comment>
<comment type="catalytic activity">
    <reaction evidence="1">
        <text>D-ribulose 1,5-bisphosphate + O2 = 2-phosphoglycolate + (2R)-3-phosphoglycerate + 2 H(+)</text>
        <dbReference type="Rhea" id="RHEA:36631"/>
        <dbReference type="ChEBI" id="CHEBI:15378"/>
        <dbReference type="ChEBI" id="CHEBI:15379"/>
        <dbReference type="ChEBI" id="CHEBI:57870"/>
        <dbReference type="ChEBI" id="CHEBI:58033"/>
        <dbReference type="ChEBI" id="CHEBI:58272"/>
    </reaction>
</comment>
<comment type="cofactor">
    <cofactor evidence="1">
        <name>Mg(2+)</name>
        <dbReference type="ChEBI" id="CHEBI:18420"/>
    </cofactor>
    <text evidence="1">Binds 1 Mg(2+) ion per subunit.</text>
</comment>
<comment type="subunit">
    <text evidence="1">Heterohexadecamer of 8 large chains and 8 small chains; disulfide-linked. The disulfide link is formed within the large subunit homodimers.</text>
</comment>
<comment type="subcellular location">
    <subcellularLocation>
        <location>Plastid</location>
        <location>Chloroplast</location>
    </subcellularLocation>
</comment>
<comment type="PTM">
    <text evidence="1">The disulfide bond which can form in the large chain dimeric partners within the hexadecamer appears to be associated with oxidative stress and protein turnover.</text>
</comment>
<comment type="miscellaneous">
    <text evidence="1">The basic functional RuBisCO is composed of a large chain homodimer in a 'head-to-tail' conformation. In form I RuBisCO this homodimer is arranged in a barrel-like tetramer with the small subunits forming a tetrameric 'cap' on each end of the 'barrel'.</text>
</comment>
<comment type="similarity">
    <text evidence="1">Belongs to the RuBisCO large chain family. Type I subfamily.</text>
</comment>
<feature type="chain" id="PRO_0000062526" description="Ribulose bisphosphate carboxylase large chain">
    <location>
        <begin position="1" status="less than"/>
        <end position="455" status="greater than"/>
    </location>
</feature>
<feature type="active site" description="Proton acceptor" evidence="1">
    <location>
        <position position="166"/>
    </location>
</feature>
<feature type="active site" description="Proton acceptor" evidence="1">
    <location>
        <position position="285"/>
    </location>
</feature>
<feature type="binding site" description="in homodimeric partner" evidence="1">
    <location>
        <position position="114"/>
    </location>
    <ligand>
        <name>substrate</name>
    </ligand>
</feature>
<feature type="binding site" evidence="1">
    <location>
        <position position="164"/>
    </location>
    <ligand>
        <name>substrate</name>
    </ligand>
</feature>
<feature type="binding site" evidence="1">
    <location>
        <position position="168"/>
    </location>
    <ligand>
        <name>substrate</name>
    </ligand>
</feature>
<feature type="binding site" description="via carbamate group" evidence="1">
    <location>
        <position position="192"/>
    </location>
    <ligand>
        <name>Mg(2+)</name>
        <dbReference type="ChEBI" id="CHEBI:18420"/>
    </ligand>
</feature>
<feature type="binding site" evidence="1">
    <location>
        <position position="194"/>
    </location>
    <ligand>
        <name>Mg(2+)</name>
        <dbReference type="ChEBI" id="CHEBI:18420"/>
    </ligand>
</feature>
<feature type="binding site" evidence="1">
    <location>
        <position position="195"/>
    </location>
    <ligand>
        <name>Mg(2+)</name>
        <dbReference type="ChEBI" id="CHEBI:18420"/>
    </ligand>
</feature>
<feature type="binding site" evidence="1">
    <location>
        <position position="286"/>
    </location>
    <ligand>
        <name>substrate</name>
    </ligand>
</feature>
<feature type="binding site" evidence="1">
    <location>
        <position position="318"/>
    </location>
    <ligand>
        <name>substrate</name>
    </ligand>
</feature>
<feature type="binding site" evidence="1">
    <location>
        <position position="370"/>
    </location>
    <ligand>
        <name>substrate</name>
    </ligand>
</feature>
<feature type="site" description="Transition state stabilizer" evidence="1">
    <location>
        <position position="325"/>
    </location>
</feature>
<feature type="modified residue" description="N6,N6,N6-trimethyllysine" evidence="1">
    <location>
        <position position="5"/>
    </location>
</feature>
<feature type="modified residue" description="N6-carboxylysine" evidence="1">
    <location>
        <position position="192"/>
    </location>
</feature>
<feature type="disulfide bond" description="Interchain; in linked form" evidence="1">
    <location>
        <position position="238"/>
    </location>
</feature>
<feature type="non-terminal residue">
    <location>
        <position position="1"/>
    </location>
</feature>
<feature type="non-terminal residue">
    <location>
        <position position="455"/>
    </location>
</feature>
<keyword id="KW-0113">Calvin cycle</keyword>
<keyword id="KW-0120">Carbon dioxide fixation</keyword>
<keyword id="KW-0150">Chloroplast</keyword>
<keyword id="KW-1015">Disulfide bond</keyword>
<keyword id="KW-0456">Lyase</keyword>
<keyword id="KW-0460">Magnesium</keyword>
<keyword id="KW-0479">Metal-binding</keyword>
<keyword id="KW-0488">Methylation</keyword>
<keyword id="KW-0503">Monooxygenase</keyword>
<keyword id="KW-0560">Oxidoreductase</keyword>
<keyword id="KW-0601">Photorespiration</keyword>
<keyword id="KW-0602">Photosynthesis</keyword>
<keyword id="KW-0934">Plastid</keyword>
<evidence type="ECO:0000255" key="1">
    <source>
        <dbReference type="HAMAP-Rule" id="MF_01338"/>
    </source>
</evidence>
<gene>
    <name evidence="1" type="primary">rbcL</name>
</gene>
<sequence>SVGFKAGVKDYKLTYYTPDYETKDTDILAAFRVTPQPGVPPEEAGAAVAAESSTGTWTTVWTDGLTSLDRYKGRCYHIEPVAGEESQFIAYVAYPLDLFEEGSVTNMFTSIVGNVFGFKALRALRLEDLRIPNAYVKTFQGPPHGIQVERDKLNKYGRPLLGCTIKPKLGLSAKNYGRAVYECLRGGLDFTKDDENVNSQPFMRWRDRFLFCAEALYKAQAETGEIKGHYLNATAGTCEEMIKRAVFARELGVPIVMHDYLTGGFTANTSLAHYCRDNGLLLHIHRAMHAVIDRQKNHGMHFRVLAKALRLSGGDHIHSGTVVGKLEGEREITLGFVDLLRDDFVEKDRSRGIYFTQDWVSLPGVLPVASGGIHVWHMPALTEIFGDDSVLQFGGGTLGHPWGNAPGAVANRVALEACVQARNEGRDLASEGNQIIREASKWSPELAAACEVWKE</sequence>
<name>RBL_LUPPI</name>